<accession>Q6GB77</accession>
<sequence>MGFLSKILDGNNKEIKQLGKLADKVIALEEKTAILTDEEIRNKTKQFQTELADIDNVKKQNDYLDKILPEAYALVREGSKRVFNMTPYKVQIMGGIAIHKGDIAEMRTGEGKTLTATMPTYLNALAGRGVHVITVNEYLSSVQSEEMAELYNFLGLTVGLNLNSKTTEEKREAYAQDITYSTNNELGFDYLRDNMVNYSEDRVMRPLHFAIIDEVDSILIDEARTPLIISGEAEKSTSLYTQANVFAKMLKQDEDYKYDEKTKAVHLTEQGADKAERMFKVENLYDVQNVDVISHINTALRAHVTLQRDVDYMVVDGEVLIVDQFTGRTMPGRRFSEGLHQAIEAKEGVQIQNESKTMASITFQNYFRMYNKLAGMTGTAKTEEEEFRNIYNMTVTQIPTNKPVQRNDKSDLIYISQKGKFDAVVEDVVEKHKAGQPVLLGTVAVETSEYISNLLKKRGIRHDVLNAKNHEREAEIVAGAGQKGAVTIATNMAGRGTDIKLGEGVEELGGLAVIGTERHESRRIDDQLRGRSGRQGDKGDSRFYLSLQDELMIRFGSERLQKMMSRLGLDDSTPIESKMVSRAVESAQKRVEGNNFDARKRILEYDEVLRKQREIIYNERNSIIDEEDSSQVVDAMLRSTLQRSINYYINTADDEPEYQPFIDYINDIFLQEGDITEDDIKGKDAEDIFEVVWAKIEAAYQSQKDILEEQMNEFERMILLRSIDSHWTDHIDTMDQLRQGIHLRSYAQQNPLRDYQNEGHELFDIMMQNIEEDTCKFILKSVVQVEDNIEREKTTEFGEAKHVSAEDGKEKVKPKPIVKGDQVGRNDDCPCGSGKKFKNCHGK</sequence>
<evidence type="ECO:0000255" key="1">
    <source>
        <dbReference type="HAMAP-Rule" id="MF_01382"/>
    </source>
</evidence>
<evidence type="ECO:0000256" key="2">
    <source>
        <dbReference type="SAM" id="MobiDB-lite"/>
    </source>
</evidence>
<reference key="1">
    <citation type="journal article" date="2004" name="Proc. Natl. Acad. Sci. U.S.A.">
        <title>Complete genomes of two clinical Staphylococcus aureus strains: evidence for the rapid evolution of virulence and drug resistance.</title>
        <authorList>
            <person name="Holden M.T.G."/>
            <person name="Feil E.J."/>
            <person name="Lindsay J.A."/>
            <person name="Peacock S.J."/>
            <person name="Day N.P.J."/>
            <person name="Enright M.C."/>
            <person name="Foster T.J."/>
            <person name="Moore C.E."/>
            <person name="Hurst L."/>
            <person name="Atkin R."/>
            <person name="Barron A."/>
            <person name="Bason N."/>
            <person name="Bentley S.D."/>
            <person name="Chillingworth C."/>
            <person name="Chillingworth T."/>
            <person name="Churcher C."/>
            <person name="Clark L."/>
            <person name="Corton C."/>
            <person name="Cronin A."/>
            <person name="Doggett J."/>
            <person name="Dowd L."/>
            <person name="Feltwell T."/>
            <person name="Hance Z."/>
            <person name="Harris B."/>
            <person name="Hauser H."/>
            <person name="Holroyd S."/>
            <person name="Jagels K."/>
            <person name="James K.D."/>
            <person name="Lennard N."/>
            <person name="Line A."/>
            <person name="Mayes R."/>
            <person name="Moule S."/>
            <person name="Mungall K."/>
            <person name="Ormond D."/>
            <person name="Quail M.A."/>
            <person name="Rabbinowitsch E."/>
            <person name="Rutherford K.M."/>
            <person name="Sanders M."/>
            <person name="Sharp S."/>
            <person name="Simmonds M."/>
            <person name="Stevens K."/>
            <person name="Whitehead S."/>
            <person name="Barrell B.G."/>
            <person name="Spratt B.G."/>
            <person name="Parkhill J."/>
        </authorList>
    </citation>
    <scope>NUCLEOTIDE SEQUENCE [LARGE SCALE GENOMIC DNA]</scope>
    <source>
        <strain>MSSA476</strain>
    </source>
</reference>
<dbReference type="EC" id="7.4.2.8" evidence="1"/>
<dbReference type="EMBL" id="BX571857">
    <property type="protein sequence ID" value="CAG42494.1"/>
    <property type="molecule type" value="Genomic_DNA"/>
</dbReference>
<dbReference type="SMR" id="Q6GB77"/>
<dbReference type="KEGG" id="sas:SAS0718"/>
<dbReference type="HOGENOM" id="CLU_005314_3_0_9"/>
<dbReference type="GO" id="GO:0031522">
    <property type="term" value="C:cell envelope Sec protein transport complex"/>
    <property type="evidence" value="ECO:0007669"/>
    <property type="project" value="TreeGrafter"/>
</dbReference>
<dbReference type="GO" id="GO:0005829">
    <property type="term" value="C:cytosol"/>
    <property type="evidence" value="ECO:0007669"/>
    <property type="project" value="TreeGrafter"/>
</dbReference>
<dbReference type="GO" id="GO:0005886">
    <property type="term" value="C:plasma membrane"/>
    <property type="evidence" value="ECO:0007669"/>
    <property type="project" value="UniProtKB-SubCell"/>
</dbReference>
<dbReference type="GO" id="GO:0005524">
    <property type="term" value="F:ATP binding"/>
    <property type="evidence" value="ECO:0007669"/>
    <property type="project" value="UniProtKB-UniRule"/>
</dbReference>
<dbReference type="GO" id="GO:0046872">
    <property type="term" value="F:metal ion binding"/>
    <property type="evidence" value="ECO:0007669"/>
    <property type="project" value="UniProtKB-KW"/>
</dbReference>
<dbReference type="GO" id="GO:0008564">
    <property type="term" value="F:protein-exporting ATPase activity"/>
    <property type="evidence" value="ECO:0007669"/>
    <property type="project" value="UniProtKB-EC"/>
</dbReference>
<dbReference type="GO" id="GO:0065002">
    <property type="term" value="P:intracellular protein transmembrane transport"/>
    <property type="evidence" value="ECO:0007669"/>
    <property type="project" value="UniProtKB-UniRule"/>
</dbReference>
<dbReference type="GO" id="GO:0017038">
    <property type="term" value="P:protein import"/>
    <property type="evidence" value="ECO:0007669"/>
    <property type="project" value="InterPro"/>
</dbReference>
<dbReference type="GO" id="GO:0006605">
    <property type="term" value="P:protein targeting"/>
    <property type="evidence" value="ECO:0007669"/>
    <property type="project" value="UniProtKB-UniRule"/>
</dbReference>
<dbReference type="GO" id="GO:0043952">
    <property type="term" value="P:protein transport by the Sec complex"/>
    <property type="evidence" value="ECO:0007669"/>
    <property type="project" value="TreeGrafter"/>
</dbReference>
<dbReference type="CDD" id="cd17928">
    <property type="entry name" value="DEXDc_SecA"/>
    <property type="match status" value="1"/>
</dbReference>
<dbReference type="CDD" id="cd18803">
    <property type="entry name" value="SF2_C_secA"/>
    <property type="match status" value="1"/>
</dbReference>
<dbReference type="FunFam" id="3.40.50.300:FF:000694">
    <property type="entry name" value="Preprotein translocase subunit SecA"/>
    <property type="match status" value="1"/>
</dbReference>
<dbReference type="FunFam" id="3.90.1440.10:FF:000002">
    <property type="entry name" value="Protein translocase subunit SecA"/>
    <property type="match status" value="1"/>
</dbReference>
<dbReference type="Gene3D" id="1.10.3060.10">
    <property type="entry name" value="Helical scaffold and wing domains of SecA"/>
    <property type="match status" value="1"/>
</dbReference>
<dbReference type="Gene3D" id="3.40.50.300">
    <property type="entry name" value="P-loop containing nucleotide triphosphate hydrolases"/>
    <property type="match status" value="2"/>
</dbReference>
<dbReference type="Gene3D" id="3.90.1440.10">
    <property type="entry name" value="SecA, preprotein cross-linking domain"/>
    <property type="match status" value="1"/>
</dbReference>
<dbReference type="HAMAP" id="MF_01382">
    <property type="entry name" value="SecA"/>
    <property type="match status" value="1"/>
</dbReference>
<dbReference type="InterPro" id="IPR014001">
    <property type="entry name" value="Helicase_ATP-bd"/>
</dbReference>
<dbReference type="InterPro" id="IPR001650">
    <property type="entry name" value="Helicase_C-like"/>
</dbReference>
<dbReference type="InterPro" id="IPR027417">
    <property type="entry name" value="P-loop_NTPase"/>
</dbReference>
<dbReference type="InterPro" id="IPR004027">
    <property type="entry name" value="SEC_C_motif"/>
</dbReference>
<dbReference type="InterPro" id="IPR000185">
    <property type="entry name" value="SecA"/>
</dbReference>
<dbReference type="InterPro" id="IPR020937">
    <property type="entry name" value="SecA_CS"/>
</dbReference>
<dbReference type="InterPro" id="IPR011115">
    <property type="entry name" value="SecA_DEAD"/>
</dbReference>
<dbReference type="InterPro" id="IPR014018">
    <property type="entry name" value="SecA_motor_DEAD"/>
</dbReference>
<dbReference type="InterPro" id="IPR011130">
    <property type="entry name" value="SecA_preprotein_X-link_dom"/>
</dbReference>
<dbReference type="InterPro" id="IPR044722">
    <property type="entry name" value="SecA_SF2_C"/>
</dbReference>
<dbReference type="InterPro" id="IPR011116">
    <property type="entry name" value="SecA_Wing/Scaffold"/>
</dbReference>
<dbReference type="InterPro" id="IPR036266">
    <property type="entry name" value="SecA_Wing/Scaffold_sf"/>
</dbReference>
<dbReference type="InterPro" id="IPR036670">
    <property type="entry name" value="SecA_X-link_sf"/>
</dbReference>
<dbReference type="NCBIfam" id="NF006630">
    <property type="entry name" value="PRK09200.1"/>
    <property type="match status" value="1"/>
</dbReference>
<dbReference type="NCBIfam" id="TIGR00963">
    <property type="entry name" value="secA"/>
    <property type="match status" value="1"/>
</dbReference>
<dbReference type="PANTHER" id="PTHR30612:SF0">
    <property type="entry name" value="CHLOROPLAST PROTEIN-TRANSPORTING ATPASE"/>
    <property type="match status" value="1"/>
</dbReference>
<dbReference type="PANTHER" id="PTHR30612">
    <property type="entry name" value="SECA INNER MEMBRANE COMPONENT OF SEC PROTEIN SECRETION SYSTEM"/>
    <property type="match status" value="1"/>
</dbReference>
<dbReference type="Pfam" id="PF21090">
    <property type="entry name" value="P-loop_SecA"/>
    <property type="match status" value="1"/>
</dbReference>
<dbReference type="Pfam" id="PF02810">
    <property type="entry name" value="SEC-C"/>
    <property type="match status" value="1"/>
</dbReference>
<dbReference type="Pfam" id="PF07517">
    <property type="entry name" value="SecA_DEAD"/>
    <property type="match status" value="1"/>
</dbReference>
<dbReference type="Pfam" id="PF01043">
    <property type="entry name" value="SecA_PP_bind"/>
    <property type="match status" value="1"/>
</dbReference>
<dbReference type="Pfam" id="PF07516">
    <property type="entry name" value="SecA_SW"/>
    <property type="match status" value="1"/>
</dbReference>
<dbReference type="PRINTS" id="PR00906">
    <property type="entry name" value="SECA"/>
</dbReference>
<dbReference type="SMART" id="SM00957">
    <property type="entry name" value="SecA_DEAD"/>
    <property type="match status" value="1"/>
</dbReference>
<dbReference type="SMART" id="SM00958">
    <property type="entry name" value="SecA_PP_bind"/>
    <property type="match status" value="1"/>
</dbReference>
<dbReference type="SUPFAM" id="SSF81886">
    <property type="entry name" value="Helical scaffold and wing domains of SecA"/>
    <property type="match status" value="1"/>
</dbReference>
<dbReference type="SUPFAM" id="SSF52540">
    <property type="entry name" value="P-loop containing nucleoside triphosphate hydrolases"/>
    <property type="match status" value="2"/>
</dbReference>
<dbReference type="SUPFAM" id="SSF81767">
    <property type="entry name" value="Pre-protein crosslinking domain of SecA"/>
    <property type="match status" value="1"/>
</dbReference>
<dbReference type="PROSITE" id="PS01312">
    <property type="entry name" value="SECA"/>
    <property type="match status" value="1"/>
</dbReference>
<dbReference type="PROSITE" id="PS51196">
    <property type="entry name" value="SECA_MOTOR_DEAD"/>
    <property type="match status" value="1"/>
</dbReference>
<keyword id="KW-0067">ATP-binding</keyword>
<keyword id="KW-1003">Cell membrane</keyword>
<keyword id="KW-0963">Cytoplasm</keyword>
<keyword id="KW-0472">Membrane</keyword>
<keyword id="KW-0479">Metal-binding</keyword>
<keyword id="KW-0547">Nucleotide-binding</keyword>
<keyword id="KW-0653">Protein transport</keyword>
<keyword id="KW-1278">Translocase</keyword>
<keyword id="KW-0811">Translocation</keyword>
<keyword id="KW-0813">Transport</keyword>
<keyword id="KW-0862">Zinc</keyword>
<proteinExistence type="inferred from homology"/>
<gene>
    <name evidence="1" type="primary">secA1</name>
    <name type="ordered locus">SAS0718</name>
</gene>
<protein>
    <recommendedName>
        <fullName evidence="1">Protein translocase subunit SecA 1</fullName>
        <ecNumber evidence="1">7.4.2.8</ecNumber>
    </recommendedName>
</protein>
<name>SECA1_STAAS</name>
<comment type="function">
    <text evidence="1">Part of the Sec protein translocase complex. Interacts with the SecYEG preprotein conducting channel. Has a central role in coupling the hydrolysis of ATP to the transfer of proteins into and across the cell membrane, serving as an ATP-driven molecular motor driving the stepwise translocation of polypeptide chains across the membrane.</text>
</comment>
<comment type="catalytic activity">
    <reaction evidence="1">
        <text>ATP + H2O + cellular proteinSide 1 = ADP + phosphate + cellular proteinSide 2.</text>
        <dbReference type="EC" id="7.4.2.8"/>
    </reaction>
</comment>
<comment type="cofactor">
    <cofactor evidence="1">
        <name>Zn(2+)</name>
        <dbReference type="ChEBI" id="CHEBI:29105"/>
    </cofactor>
    <text evidence="1">May bind 1 zinc ion per subunit.</text>
</comment>
<comment type="subunit">
    <text evidence="1">Monomer and homodimer. Part of the essential Sec protein translocation apparatus which comprises SecA, SecYEG and auxiliary proteins SecDF. Other proteins may also be involved.</text>
</comment>
<comment type="subcellular location">
    <subcellularLocation>
        <location evidence="1">Cell membrane</location>
        <topology evidence="1">Peripheral membrane protein</topology>
        <orientation evidence="1">Cytoplasmic side</orientation>
    </subcellularLocation>
    <subcellularLocation>
        <location evidence="1">Cytoplasm</location>
    </subcellularLocation>
    <text evidence="1">Distribution is 50-50.</text>
</comment>
<comment type="similarity">
    <text evidence="1">Belongs to the SecA family.</text>
</comment>
<feature type="chain" id="PRO_0000109606" description="Protein translocase subunit SecA 1">
    <location>
        <begin position="1"/>
        <end position="843"/>
    </location>
</feature>
<feature type="region of interest" description="Disordered" evidence="2">
    <location>
        <begin position="799"/>
        <end position="826"/>
    </location>
</feature>
<feature type="compositionally biased region" description="Basic and acidic residues" evidence="2">
    <location>
        <begin position="799"/>
        <end position="813"/>
    </location>
</feature>
<feature type="binding site" evidence="1">
    <location>
        <position position="91"/>
    </location>
    <ligand>
        <name>ATP</name>
        <dbReference type="ChEBI" id="CHEBI:30616"/>
    </ligand>
</feature>
<feature type="binding site" evidence="1">
    <location>
        <begin position="109"/>
        <end position="113"/>
    </location>
    <ligand>
        <name>ATP</name>
        <dbReference type="ChEBI" id="CHEBI:30616"/>
    </ligand>
</feature>
<feature type="binding site" evidence="1">
    <location>
        <position position="498"/>
    </location>
    <ligand>
        <name>ATP</name>
        <dbReference type="ChEBI" id="CHEBI:30616"/>
    </ligand>
</feature>
<feature type="binding site" evidence="1">
    <location>
        <position position="829"/>
    </location>
    <ligand>
        <name>Zn(2+)</name>
        <dbReference type="ChEBI" id="CHEBI:29105"/>
    </ligand>
</feature>
<feature type="binding site" evidence="1">
    <location>
        <position position="831"/>
    </location>
    <ligand>
        <name>Zn(2+)</name>
        <dbReference type="ChEBI" id="CHEBI:29105"/>
    </ligand>
</feature>
<feature type="binding site" evidence="1">
    <location>
        <position position="840"/>
    </location>
    <ligand>
        <name>Zn(2+)</name>
        <dbReference type="ChEBI" id="CHEBI:29105"/>
    </ligand>
</feature>
<feature type="binding site" evidence="1">
    <location>
        <position position="841"/>
    </location>
    <ligand>
        <name>Zn(2+)</name>
        <dbReference type="ChEBI" id="CHEBI:29105"/>
    </ligand>
</feature>
<organism>
    <name type="scientific">Staphylococcus aureus (strain MSSA476)</name>
    <dbReference type="NCBI Taxonomy" id="282459"/>
    <lineage>
        <taxon>Bacteria</taxon>
        <taxon>Bacillati</taxon>
        <taxon>Bacillota</taxon>
        <taxon>Bacilli</taxon>
        <taxon>Bacillales</taxon>
        <taxon>Staphylococcaceae</taxon>
        <taxon>Staphylococcus</taxon>
    </lineage>
</organism>